<organism evidence="4">
    <name type="scientific">Arabidopsis thaliana</name>
    <name type="common">Mouse-ear cress</name>
    <dbReference type="NCBI Taxonomy" id="3702"/>
    <lineage>
        <taxon>Eukaryota</taxon>
        <taxon>Viridiplantae</taxon>
        <taxon>Streptophyta</taxon>
        <taxon>Embryophyta</taxon>
        <taxon>Tracheophyta</taxon>
        <taxon>Spermatophyta</taxon>
        <taxon>Magnoliopsida</taxon>
        <taxon>eudicotyledons</taxon>
        <taxon>Gunneridae</taxon>
        <taxon>Pentapetalae</taxon>
        <taxon>rosids</taxon>
        <taxon>malvids</taxon>
        <taxon>Brassicales</taxon>
        <taxon>Brassicaceae</taxon>
        <taxon>Camelineae</taxon>
        <taxon>Arabidopsis</taxon>
    </lineage>
</organism>
<accession>P82623</accession>
<accession>A0MJS7</accession>
<accession>A7RED2</accession>
<proteinExistence type="evidence at transcript level"/>
<feature type="signal peptide" evidence="2">
    <location>
        <begin position="1"/>
        <end position="24"/>
    </location>
</feature>
<feature type="chain" id="PRO_0000031930" description="Defensin-like protein 245">
    <location>
        <begin position="25"/>
        <end position="97"/>
    </location>
</feature>
<feature type="disulfide bond" evidence="1">
    <location>
        <begin position="39"/>
        <end position="96"/>
    </location>
</feature>
<feature type="disulfide bond" evidence="1">
    <location>
        <begin position="50"/>
        <end position="79"/>
    </location>
</feature>
<feature type="disulfide bond" evidence="1">
    <location>
        <begin position="58"/>
        <end position="89"/>
    </location>
</feature>
<feature type="disulfide bond" evidence="1">
    <location>
        <begin position="77"/>
        <end position="91"/>
    </location>
</feature>
<dbReference type="EMBL" id="AC018908">
    <property type="status" value="NOT_ANNOTATED_CDS"/>
    <property type="molecule type" value="Genomic_DNA"/>
</dbReference>
<dbReference type="EMBL" id="CP002684">
    <property type="protein sequence ID" value="AEE33758.1"/>
    <property type="molecule type" value="Genomic_DNA"/>
</dbReference>
<dbReference type="EMBL" id="DQ912181">
    <property type="protein sequence ID" value="ABI34004.1"/>
    <property type="molecule type" value="mRNA"/>
</dbReference>
<dbReference type="EMBL" id="DQ912226">
    <property type="protein sequence ID" value="ABK27941.1"/>
    <property type="status" value="ALT_SEQ"/>
    <property type="molecule type" value="mRNA"/>
</dbReference>
<dbReference type="EMBL" id="EF182798">
    <property type="status" value="NOT_ANNOTATED_CDS"/>
    <property type="molecule type" value="mRNA"/>
</dbReference>
<dbReference type="RefSeq" id="NP_001031213.1">
    <property type="nucleotide sequence ID" value="NM_001036136.2"/>
</dbReference>
<dbReference type="SMR" id="P82623"/>
<dbReference type="PaxDb" id="3702-AT1G60986.1"/>
<dbReference type="EnsemblPlants" id="AT1G60986.1">
    <property type="protein sequence ID" value="AT1G60986.1"/>
    <property type="gene ID" value="AT1G60986"/>
</dbReference>
<dbReference type="GeneID" id="3767592"/>
<dbReference type="Gramene" id="AT1G60986.1">
    <property type="protein sequence ID" value="AT1G60986.1"/>
    <property type="gene ID" value="AT1G60986"/>
</dbReference>
<dbReference type="KEGG" id="ath:AT1G60986"/>
<dbReference type="Araport" id="AT1G60986"/>
<dbReference type="TAIR" id="AT1G60986">
    <property type="gene designation" value="SCRL4"/>
</dbReference>
<dbReference type="HOGENOM" id="CLU_174283_0_0_1"/>
<dbReference type="InParanoid" id="P82623"/>
<dbReference type="OMA" id="SCNCTPQ"/>
<dbReference type="OrthoDB" id="1051651at2759"/>
<dbReference type="PhylomeDB" id="P82623"/>
<dbReference type="PRO" id="PR:P82623"/>
<dbReference type="Proteomes" id="UP000006548">
    <property type="component" value="Chromosome 1"/>
</dbReference>
<dbReference type="ExpressionAtlas" id="P82623">
    <property type="expression patterns" value="baseline and differential"/>
</dbReference>
<dbReference type="GO" id="GO:0005576">
    <property type="term" value="C:extracellular region"/>
    <property type="evidence" value="ECO:0007669"/>
    <property type="project" value="UniProtKB-SubCell"/>
</dbReference>
<dbReference type="GO" id="GO:0050832">
    <property type="term" value="P:defense response to fungus"/>
    <property type="evidence" value="ECO:0007669"/>
    <property type="project" value="UniProtKB-KW"/>
</dbReference>
<dbReference type="GO" id="GO:0031640">
    <property type="term" value="P:killing of cells of another organism"/>
    <property type="evidence" value="ECO:0007669"/>
    <property type="project" value="UniProtKB-KW"/>
</dbReference>
<dbReference type="GO" id="GO:0007165">
    <property type="term" value="P:signal transduction"/>
    <property type="evidence" value="ECO:0007669"/>
    <property type="project" value="InterPro"/>
</dbReference>
<dbReference type="InterPro" id="IPR010682">
    <property type="entry name" value="SCRL"/>
</dbReference>
<dbReference type="PANTHER" id="PTHR34450">
    <property type="entry name" value="DEFENSIN-LIKE PROTEIN 245-RELATED"/>
    <property type="match status" value="1"/>
</dbReference>
<dbReference type="PANTHER" id="PTHR34450:SF10">
    <property type="entry name" value="DEFENSIN-LIKE PROTEIN 245-RELATED"/>
    <property type="match status" value="1"/>
</dbReference>
<dbReference type="Pfam" id="PF06876">
    <property type="entry name" value="SCRL"/>
    <property type="match status" value="1"/>
</dbReference>
<reference evidence="4" key="1">
    <citation type="journal article" date="2000" name="Nature">
        <title>Sequence and analysis of chromosome 1 of the plant Arabidopsis thaliana.</title>
        <authorList>
            <person name="Theologis A."/>
            <person name="Ecker J.R."/>
            <person name="Palm C.J."/>
            <person name="Federspiel N.A."/>
            <person name="Kaul S."/>
            <person name="White O."/>
            <person name="Alonso J."/>
            <person name="Altafi H."/>
            <person name="Araujo R."/>
            <person name="Bowman C.L."/>
            <person name="Brooks S.Y."/>
            <person name="Buehler E."/>
            <person name="Chan A."/>
            <person name="Chao Q."/>
            <person name="Chen H."/>
            <person name="Cheuk R.F."/>
            <person name="Chin C.W."/>
            <person name="Chung M.K."/>
            <person name="Conn L."/>
            <person name="Conway A.B."/>
            <person name="Conway A.R."/>
            <person name="Creasy T.H."/>
            <person name="Dewar K."/>
            <person name="Dunn P."/>
            <person name="Etgu P."/>
            <person name="Feldblyum T.V."/>
            <person name="Feng J.-D."/>
            <person name="Fong B."/>
            <person name="Fujii C.Y."/>
            <person name="Gill J.E."/>
            <person name="Goldsmith A.D."/>
            <person name="Haas B."/>
            <person name="Hansen N.F."/>
            <person name="Hughes B."/>
            <person name="Huizar L."/>
            <person name="Hunter J.L."/>
            <person name="Jenkins J."/>
            <person name="Johnson-Hopson C."/>
            <person name="Khan S."/>
            <person name="Khaykin E."/>
            <person name="Kim C.J."/>
            <person name="Koo H.L."/>
            <person name="Kremenetskaia I."/>
            <person name="Kurtz D.B."/>
            <person name="Kwan A."/>
            <person name="Lam B."/>
            <person name="Langin-Hooper S."/>
            <person name="Lee A."/>
            <person name="Lee J.M."/>
            <person name="Lenz C.A."/>
            <person name="Li J.H."/>
            <person name="Li Y.-P."/>
            <person name="Lin X."/>
            <person name="Liu S.X."/>
            <person name="Liu Z.A."/>
            <person name="Luros J.S."/>
            <person name="Maiti R."/>
            <person name="Marziali A."/>
            <person name="Militscher J."/>
            <person name="Miranda M."/>
            <person name="Nguyen M."/>
            <person name="Nierman W.C."/>
            <person name="Osborne B.I."/>
            <person name="Pai G."/>
            <person name="Peterson J."/>
            <person name="Pham P.K."/>
            <person name="Rizzo M."/>
            <person name="Rooney T."/>
            <person name="Rowley D."/>
            <person name="Sakano H."/>
            <person name="Salzberg S.L."/>
            <person name="Schwartz J.R."/>
            <person name="Shinn P."/>
            <person name="Southwick A.M."/>
            <person name="Sun H."/>
            <person name="Tallon L.J."/>
            <person name="Tambunga G."/>
            <person name="Toriumi M.J."/>
            <person name="Town C.D."/>
            <person name="Utterback T."/>
            <person name="Van Aken S."/>
            <person name="Vaysberg M."/>
            <person name="Vysotskaia V.S."/>
            <person name="Walker M."/>
            <person name="Wu D."/>
            <person name="Yu G."/>
            <person name="Fraser C.M."/>
            <person name="Venter J.C."/>
            <person name="Davis R.W."/>
        </authorList>
    </citation>
    <scope>NUCLEOTIDE SEQUENCE [LARGE SCALE GENOMIC DNA]</scope>
    <source>
        <strain>cv. Columbia</strain>
    </source>
</reference>
<reference key="2">
    <citation type="journal article" date="2017" name="Plant J.">
        <title>Araport11: a complete reannotation of the Arabidopsis thaliana reference genome.</title>
        <authorList>
            <person name="Cheng C.Y."/>
            <person name="Krishnakumar V."/>
            <person name="Chan A.P."/>
            <person name="Thibaud-Nissen F."/>
            <person name="Schobel S."/>
            <person name="Town C.D."/>
        </authorList>
    </citation>
    <scope>GENOME REANNOTATION</scope>
    <source>
        <strain>cv. Columbia</strain>
    </source>
</reference>
<reference key="3">
    <citation type="journal article" date="2006" name="Plant Biotechnol. J.">
        <title>Simultaneous high-throughput recombinational cloning of open reading frames in closed and open configurations.</title>
        <authorList>
            <person name="Underwood B.A."/>
            <person name="Vanderhaeghen R."/>
            <person name="Whitford R."/>
            <person name="Town C.D."/>
            <person name="Hilson P."/>
        </authorList>
    </citation>
    <scope>NUCLEOTIDE SEQUENCE [LARGE SCALE MRNA]</scope>
    <source>
        <strain>cv. Columbia</strain>
    </source>
</reference>
<reference key="4">
    <citation type="journal article" date="2007" name="Plant J.">
        <title>Small cysteine-rich peptides resembling antimicrobial peptides have been under-predicted in plants.</title>
        <authorList>
            <person name="Silverstein K.A.T."/>
            <person name="Moskal W.A. Jr."/>
            <person name="Wu H.C."/>
            <person name="Underwood B.A."/>
            <person name="Graham M.A."/>
            <person name="Town C.D."/>
            <person name="VandenBosch K.A."/>
        </authorList>
    </citation>
    <scope>NUCLEOTIDE SEQUENCE [LARGE SCALE MRNA]</scope>
    <source>
        <strain>cv. Columbia</strain>
    </source>
</reference>
<reference evidence="4" key="5">
    <citation type="journal article" date="2001" name="Plant Mol. Biol.">
        <title>Two large Arabidopsis thaliana gene families are homologous to the Brassica gene superfamily that encodes pollen coat proteins and the male component of the self-incompatibility response.</title>
        <authorList>
            <person name="Vanoosthuyse V."/>
            <person name="Miege C."/>
            <person name="Dumas C."/>
            <person name="Cock J.M."/>
        </authorList>
    </citation>
    <scope>IDENTIFICATION</scope>
    <scope>TISSUE SPECIFICITY</scope>
</reference>
<reference key="6">
    <citation type="journal article" date="2005" name="Plant Physiol.">
        <title>Genome organization of more than 300 defensin-like genes in Arabidopsis.</title>
        <authorList>
            <person name="Silverstein K.A.T."/>
            <person name="Graham M.A."/>
            <person name="Paape T.D."/>
            <person name="VandenBosch K.A."/>
        </authorList>
    </citation>
    <scope>GENE FAMILY</scope>
</reference>
<name>DF245_ARATH</name>
<keyword id="KW-0929">Antimicrobial</keyword>
<keyword id="KW-1015">Disulfide bond</keyword>
<keyword id="KW-0295">Fungicide</keyword>
<keyword id="KW-0611">Plant defense</keyword>
<keyword id="KW-1185">Reference proteome</keyword>
<keyword id="KW-0964">Secreted</keyword>
<keyword id="KW-0732">Signal</keyword>
<protein>
    <recommendedName>
        <fullName>Defensin-like protein 245</fullName>
    </recommendedName>
    <alternativeName>
        <fullName>S locus cysteine-rich-like protein 4</fullName>
        <shortName>Protein SCRL4</shortName>
        <shortName>SCR-like protein 4</shortName>
    </alternativeName>
</protein>
<evidence type="ECO:0000250" key="1"/>
<evidence type="ECO:0000255" key="2"/>
<evidence type="ECO:0000269" key="3">
    <source>
    </source>
</evidence>
<evidence type="ECO:0000305" key="4"/>
<gene>
    <name type="primary">SCRL4</name>
    <name type="ordered locus">At1g60986</name>
    <name type="ORF">T7P1</name>
</gene>
<comment type="subcellular location">
    <subcellularLocation>
        <location evidence="1">Secreted</location>
    </subcellularLocation>
</comment>
<comment type="tissue specificity">
    <text evidence="3">Flower buds and roots.</text>
</comment>
<comment type="similarity">
    <text evidence="4">Belongs to the DEFL family.</text>
</comment>
<comment type="sequence caution" evidence="4">
    <conflict type="erroneous termination">
        <sequence resource="EMBL-CDS" id="ABK27941"/>
    </conflict>
    <text>Extended C-terminus.</text>
</comment>
<sequence>MKFAAILLVTCVLFSLLPSHLSQGEESSMNIDAQRRPWCPSKKQVFGGSCGNDGAQQCLNNLLSTWDPSVRLSPVSCNCTPQPNNNILCSCPNMICP</sequence>